<protein>
    <recommendedName>
        <fullName evidence="1">Ribosome-recycling factor</fullName>
        <shortName evidence="1">RRF</shortName>
    </recommendedName>
    <alternativeName>
        <fullName evidence="1">Ribosome-releasing factor</fullName>
    </alternativeName>
</protein>
<gene>
    <name evidence="1" type="primary">frr</name>
    <name type="ordered locus">Tola_2108</name>
</gene>
<proteinExistence type="inferred from homology"/>
<keyword id="KW-0963">Cytoplasm</keyword>
<keyword id="KW-0648">Protein biosynthesis</keyword>
<keyword id="KW-1185">Reference proteome</keyword>
<comment type="function">
    <text evidence="1">Responsible for the release of ribosomes from messenger RNA at the termination of protein biosynthesis. May increase the efficiency of translation by recycling ribosomes from one round of translation to another.</text>
</comment>
<comment type="subcellular location">
    <subcellularLocation>
        <location evidence="1">Cytoplasm</location>
    </subcellularLocation>
</comment>
<comment type="similarity">
    <text evidence="1">Belongs to the RRF family.</text>
</comment>
<feature type="chain" id="PRO_1000202113" description="Ribosome-recycling factor">
    <location>
        <begin position="1"/>
        <end position="185"/>
    </location>
</feature>
<evidence type="ECO:0000255" key="1">
    <source>
        <dbReference type="HAMAP-Rule" id="MF_00040"/>
    </source>
</evidence>
<reference key="1">
    <citation type="submission" date="2009-05" db="EMBL/GenBank/DDBJ databases">
        <title>Complete sequence of Tolumonas auensis DSM 9187.</title>
        <authorList>
            <consortium name="US DOE Joint Genome Institute"/>
            <person name="Lucas S."/>
            <person name="Copeland A."/>
            <person name="Lapidus A."/>
            <person name="Glavina del Rio T."/>
            <person name="Tice H."/>
            <person name="Bruce D."/>
            <person name="Goodwin L."/>
            <person name="Pitluck S."/>
            <person name="Chertkov O."/>
            <person name="Brettin T."/>
            <person name="Detter J.C."/>
            <person name="Han C."/>
            <person name="Larimer F."/>
            <person name="Land M."/>
            <person name="Hauser L."/>
            <person name="Kyrpides N."/>
            <person name="Mikhailova N."/>
            <person name="Spring S."/>
            <person name="Beller H."/>
        </authorList>
    </citation>
    <scope>NUCLEOTIDE SEQUENCE [LARGE SCALE GENOMIC DNA]</scope>
    <source>
        <strain>DSM 9187 / NBRC 110442 / TA 4</strain>
    </source>
</reference>
<name>RRF_TOLAT</name>
<dbReference type="EMBL" id="CP001616">
    <property type="protein sequence ID" value="ACQ93707.1"/>
    <property type="molecule type" value="Genomic_DNA"/>
</dbReference>
<dbReference type="RefSeq" id="WP_015879175.1">
    <property type="nucleotide sequence ID" value="NC_012691.1"/>
</dbReference>
<dbReference type="SMR" id="C4L861"/>
<dbReference type="STRING" id="595494.Tola_2108"/>
<dbReference type="KEGG" id="tau:Tola_2108"/>
<dbReference type="eggNOG" id="COG0233">
    <property type="taxonomic scope" value="Bacteria"/>
</dbReference>
<dbReference type="HOGENOM" id="CLU_073981_2_1_6"/>
<dbReference type="OrthoDB" id="9804006at2"/>
<dbReference type="Proteomes" id="UP000009073">
    <property type="component" value="Chromosome"/>
</dbReference>
<dbReference type="GO" id="GO:0005829">
    <property type="term" value="C:cytosol"/>
    <property type="evidence" value="ECO:0007669"/>
    <property type="project" value="GOC"/>
</dbReference>
<dbReference type="GO" id="GO:0043023">
    <property type="term" value="F:ribosomal large subunit binding"/>
    <property type="evidence" value="ECO:0007669"/>
    <property type="project" value="TreeGrafter"/>
</dbReference>
<dbReference type="GO" id="GO:0002184">
    <property type="term" value="P:cytoplasmic translational termination"/>
    <property type="evidence" value="ECO:0007669"/>
    <property type="project" value="TreeGrafter"/>
</dbReference>
<dbReference type="CDD" id="cd00520">
    <property type="entry name" value="RRF"/>
    <property type="match status" value="1"/>
</dbReference>
<dbReference type="FunFam" id="1.10.132.20:FF:000001">
    <property type="entry name" value="Ribosome-recycling factor"/>
    <property type="match status" value="1"/>
</dbReference>
<dbReference type="FunFam" id="3.30.1360.40:FF:000001">
    <property type="entry name" value="Ribosome-recycling factor"/>
    <property type="match status" value="1"/>
</dbReference>
<dbReference type="Gene3D" id="3.30.1360.40">
    <property type="match status" value="1"/>
</dbReference>
<dbReference type="Gene3D" id="1.10.132.20">
    <property type="entry name" value="Ribosome-recycling factor"/>
    <property type="match status" value="1"/>
</dbReference>
<dbReference type="HAMAP" id="MF_00040">
    <property type="entry name" value="RRF"/>
    <property type="match status" value="1"/>
</dbReference>
<dbReference type="InterPro" id="IPR002661">
    <property type="entry name" value="Ribosome_recyc_fac"/>
</dbReference>
<dbReference type="InterPro" id="IPR023584">
    <property type="entry name" value="Ribosome_recyc_fac_dom"/>
</dbReference>
<dbReference type="InterPro" id="IPR036191">
    <property type="entry name" value="RRF_sf"/>
</dbReference>
<dbReference type="NCBIfam" id="TIGR00496">
    <property type="entry name" value="frr"/>
    <property type="match status" value="1"/>
</dbReference>
<dbReference type="PANTHER" id="PTHR20982:SF3">
    <property type="entry name" value="MITOCHONDRIAL RIBOSOME RECYCLING FACTOR PSEUDO 1"/>
    <property type="match status" value="1"/>
</dbReference>
<dbReference type="PANTHER" id="PTHR20982">
    <property type="entry name" value="RIBOSOME RECYCLING FACTOR"/>
    <property type="match status" value="1"/>
</dbReference>
<dbReference type="Pfam" id="PF01765">
    <property type="entry name" value="RRF"/>
    <property type="match status" value="1"/>
</dbReference>
<dbReference type="SUPFAM" id="SSF55194">
    <property type="entry name" value="Ribosome recycling factor, RRF"/>
    <property type="match status" value="1"/>
</dbReference>
<sequence>MINEIKTDAKDRMTKSVDSLKSHMSKIRTGRAQPALLDGIMVEYYGSATPLRQVANVVAEDSRTLAVSVFDRSMIQAVEKAIMTSDLGLNPSSAGTTIRVPLPALTEERRKDLIKLVRAEAEQARVSVRNVRRDCNADLKALLKDKDISEDDDRRAQEEIQKLTDSFVKLVDDLLAAKEKELMEI</sequence>
<accession>C4L861</accession>
<organism>
    <name type="scientific">Tolumonas auensis (strain DSM 9187 / NBRC 110442 / TA 4)</name>
    <dbReference type="NCBI Taxonomy" id="595494"/>
    <lineage>
        <taxon>Bacteria</taxon>
        <taxon>Pseudomonadati</taxon>
        <taxon>Pseudomonadota</taxon>
        <taxon>Gammaproteobacteria</taxon>
        <taxon>Aeromonadales</taxon>
        <taxon>Aeromonadaceae</taxon>
        <taxon>Tolumonas</taxon>
    </lineage>
</organism>